<comment type="function">
    <text evidence="1">Involved in the biosynthesis of ADP-glucose, a building block required for the elongation reactions to produce glycogen. Catalyzes the reaction between ATP and alpha-D-glucose 1-phosphate (G1P) to produce pyrophosphate and ADP-Glc.</text>
</comment>
<comment type="catalytic activity">
    <reaction evidence="1">
        <text>alpha-D-glucose 1-phosphate + ATP + H(+) = ADP-alpha-D-glucose + diphosphate</text>
        <dbReference type="Rhea" id="RHEA:12120"/>
        <dbReference type="ChEBI" id="CHEBI:15378"/>
        <dbReference type="ChEBI" id="CHEBI:30616"/>
        <dbReference type="ChEBI" id="CHEBI:33019"/>
        <dbReference type="ChEBI" id="CHEBI:57498"/>
        <dbReference type="ChEBI" id="CHEBI:58601"/>
        <dbReference type="EC" id="2.7.7.27"/>
    </reaction>
</comment>
<comment type="pathway">
    <text evidence="1">Glycan biosynthesis; glycogen biosynthesis.</text>
</comment>
<comment type="subunit">
    <text evidence="1">Homotetramer.</text>
</comment>
<comment type="similarity">
    <text evidence="1">Belongs to the bacterial/plant glucose-1-phosphate adenylyltransferase family.</text>
</comment>
<sequence>MGNVVAMILAGGQGTRLGVLTERIAKPAVPFGGKYRLIDFTLSNCVNSGIYRVGVLTQYRPHVLAKHIGIGRPWDLDRKDGGVEILPPYVGRNESDWYKGTANAVYQNLEFLEENDAELVLVLSGDHVYAMNYNDLIDYHLLKGADGTIACMEVPLEEASRFGIMITDVEGRIVDFEEKPPKPRSNLASLGIYVFNYEFLKRVLIEDENDPNSSHDFGKDVIPKILRENKGSLYAFRFDGYWRDVGTIRSYWEANLELVLPVPPFNLYDPNWRFFTHSEEMPPAYVAPEARTSTSLISEGAEVYGEVTNSVIFQGVRIGKGTVVKNSVIMTRTEIGENCYLENVIVAENVKIGNNVKMGVGEDAKSKLDPKIYTGLLTVVGMNSTIPDDVVIGKNCVIGVGVKPEDFKTKKLESGDFVLPREE</sequence>
<reference key="1">
    <citation type="submission" date="2007-11" db="EMBL/GenBank/DDBJ databases">
        <title>The genome sequence of the hyperthermophilic bacterium Thermotoga neapolitana.</title>
        <authorList>
            <person name="Lim S.K."/>
            <person name="Kim J.S."/>
            <person name="Cha S.H."/>
            <person name="Park B.C."/>
            <person name="Lee D.S."/>
            <person name="Tae H.S."/>
            <person name="Kim S.-J."/>
            <person name="Kim J.J."/>
            <person name="Park K.J."/>
            <person name="Lee S.Y."/>
        </authorList>
    </citation>
    <scope>NUCLEOTIDE SEQUENCE [LARGE SCALE GENOMIC DNA]</scope>
    <source>
        <strain>ATCC 49049 / DSM 4359 / NBRC 107923 / NS-E</strain>
    </source>
</reference>
<accession>B9K6N9</accession>
<evidence type="ECO:0000255" key="1">
    <source>
        <dbReference type="HAMAP-Rule" id="MF_00624"/>
    </source>
</evidence>
<gene>
    <name evidence="1" type="primary">glgC</name>
    <name type="ordered locus">CTN_0446</name>
</gene>
<name>GLGC_THENN</name>
<keyword id="KW-0067">ATP-binding</keyword>
<keyword id="KW-0119">Carbohydrate metabolism</keyword>
<keyword id="KW-0320">Glycogen biosynthesis</keyword>
<keyword id="KW-0321">Glycogen metabolism</keyword>
<keyword id="KW-0547">Nucleotide-binding</keyword>
<keyword id="KW-0548">Nucleotidyltransferase</keyword>
<keyword id="KW-0808">Transferase</keyword>
<proteinExistence type="inferred from homology"/>
<organism>
    <name type="scientific">Thermotoga neapolitana (strain ATCC 49049 / DSM 4359 / NBRC 107923 / NS-E)</name>
    <dbReference type="NCBI Taxonomy" id="309803"/>
    <lineage>
        <taxon>Bacteria</taxon>
        <taxon>Thermotogati</taxon>
        <taxon>Thermotogota</taxon>
        <taxon>Thermotogae</taxon>
        <taxon>Thermotogales</taxon>
        <taxon>Thermotogaceae</taxon>
        <taxon>Thermotoga</taxon>
    </lineage>
</organism>
<feature type="chain" id="PRO_1000147241" description="Glucose-1-phosphate adenylyltransferase">
    <location>
        <begin position="1"/>
        <end position="423"/>
    </location>
</feature>
<feature type="binding site" evidence="1">
    <location>
        <position position="98"/>
    </location>
    <ligand>
        <name>alpha-D-glucose 1-phosphate</name>
        <dbReference type="ChEBI" id="CHEBI:58601"/>
    </ligand>
</feature>
<feature type="binding site" evidence="1">
    <location>
        <position position="163"/>
    </location>
    <ligand>
        <name>alpha-D-glucose 1-phosphate</name>
        <dbReference type="ChEBI" id="CHEBI:58601"/>
    </ligand>
</feature>
<feature type="binding site" evidence="1">
    <location>
        <begin position="178"/>
        <end position="179"/>
    </location>
    <ligand>
        <name>alpha-D-glucose 1-phosphate</name>
        <dbReference type="ChEBI" id="CHEBI:58601"/>
    </ligand>
</feature>
<feature type="binding site" evidence="1">
    <location>
        <position position="189"/>
    </location>
    <ligand>
        <name>alpha-D-glucose 1-phosphate</name>
        <dbReference type="ChEBI" id="CHEBI:58601"/>
    </ligand>
</feature>
<protein>
    <recommendedName>
        <fullName evidence="1">Glucose-1-phosphate adenylyltransferase</fullName>
        <ecNumber evidence="1">2.7.7.27</ecNumber>
    </recommendedName>
    <alternativeName>
        <fullName evidence="1">ADP-glucose pyrophosphorylase</fullName>
        <shortName evidence="1">ADPGlc PPase</shortName>
    </alternativeName>
    <alternativeName>
        <fullName evidence="1">ADP-glucose synthase</fullName>
    </alternativeName>
</protein>
<dbReference type="EC" id="2.7.7.27" evidence="1"/>
<dbReference type="EMBL" id="CP000916">
    <property type="protein sequence ID" value="ACM22622.1"/>
    <property type="molecule type" value="Genomic_DNA"/>
</dbReference>
<dbReference type="RefSeq" id="WP_015918941.1">
    <property type="nucleotide sequence ID" value="NC_011978.1"/>
</dbReference>
<dbReference type="SMR" id="B9K6N9"/>
<dbReference type="STRING" id="309803.CTN_0446"/>
<dbReference type="KEGG" id="tna:CTN_0446"/>
<dbReference type="eggNOG" id="COG0448">
    <property type="taxonomic scope" value="Bacteria"/>
</dbReference>
<dbReference type="HOGENOM" id="CLU_029499_14_0_0"/>
<dbReference type="UniPathway" id="UPA00164"/>
<dbReference type="Proteomes" id="UP000000445">
    <property type="component" value="Chromosome"/>
</dbReference>
<dbReference type="GO" id="GO:0005524">
    <property type="term" value="F:ATP binding"/>
    <property type="evidence" value="ECO:0007669"/>
    <property type="project" value="UniProtKB-KW"/>
</dbReference>
<dbReference type="GO" id="GO:0008878">
    <property type="term" value="F:glucose-1-phosphate adenylyltransferase activity"/>
    <property type="evidence" value="ECO:0007669"/>
    <property type="project" value="UniProtKB-UniRule"/>
</dbReference>
<dbReference type="GO" id="GO:0005978">
    <property type="term" value="P:glycogen biosynthetic process"/>
    <property type="evidence" value="ECO:0007669"/>
    <property type="project" value="UniProtKB-UniRule"/>
</dbReference>
<dbReference type="CDD" id="cd02508">
    <property type="entry name" value="ADP_Glucose_PP"/>
    <property type="match status" value="1"/>
</dbReference>
<dbReference type="CDD" id="cd04651">
    <property type="entry name" value="LbH_G1P_AT_C"/>
    <property type="match status" value="1"/>
</dbReference>
<dbReference type="Gene3D" id="2.160.10.10">
    <property type="entry name" value="Hexapeptide repeat proteins"/>
    <property type="match status" value="1"/>
</dbReference>
<dbReference type="Gene3D" id="3.90.550.10">
    <property type="entry name" value="Spore Coat Polysaccharide Biosynthesis Protein SpsA, Chain A"/>
    <property type="match status" value="1"/>
</dbReference>
<dbReference type="HAMAP" id="MF_00624">
    <property type="entry name" value="GlgC"/>
    <property type="match status" value="1"/>
</dbReference>
<dbReference type="InterPro" id="IPR011831">
    <property type="entry name" value="ADP-Glc_PPase"/>
</dbReference>
<dbReference type="InterPro" id="IPR005836">
    <property type="entry name" value="ADP_Glu_pyroP_CS"/>
</dbReference>
<dbReference type="InterPro" id="IPR023049">
    <property type="entry name" value="GlgC_bac"/>
</dbReference>
<dbReference type="InterPro" id="IPR056818">
    <property type="entry name" value="GlmU/GlgC-like_hexapep"/>
</dbReference>
<dbReference type="InterPro" id="IPR005835">
    <property type="entry name" value="NTP_transferase_dom"/>
</dbReference>
<dbReference type="InterPro" id="IPR029044">
    <property type="entry name" value="Nucleotide-diphossugar_trans"/>
</dbReference>
<dbReference type="InterPro" id="IPR011004">
    <property type="entry name" value="Trimer_LpxA-like_sf"/>
</dbReference>
<dbReference type="NCBIfam" id="TIGR02091">
    <property type="entry name" value="glgC"/>
    <property type="match status" value="1"/>
</dbReference>
<dbReference type="NCBIfam" id="NF003670">
    <property type="entry name" value="PRK05293.1"/>
    <property type="match status" value="1"/>
</dbReference>
<dbReference type="PANTHER" id="PTHR43523:SF2">
    <property type="entry name" value="GLUCOSE-1-PHOSPHATE ADENYLYLTRANSFERASE"/>
    <property type="match status" value="1"/>
</dbReference>
<dbReference type="PANTHER" id="PTHR43523">
    <property type="entry name" value="GLUCOSE-1-PHOSPHATE ADENYLYLTRANSFERASE-RELATED"/>
    <property type="match status" value="1"/>
</dbReference>
<dbReference type="Pfam" id="PF24894">
    <property type="entry name" value="Hexapep_GlmU"/>
    <property type="match status" value="1"/>
</dbReference>
<dbReference type="Pfam" id="PF00483">
    <property type="entry name" value="NTP_transferase"/>
    <property type="match status" value="1"/>
</dbReference>
<dbReference type="SUPFAM" id="SSF53448">
    <property type="entry name" value="Nucleotide-diphospho-sugar transferases"/>
    <property type="match status" value="1"/>
</dbReference>
<dbReference type="SUPFAM" id="SSF51161">
    <property type="entry name" value="Trimeric LpxA-like enzymes"/>
    <property type="match status" value="1"/>
</dbReference>
<dbReference type="PROSITE" id="PS00808">
    <property type="entry name" value="ADP_GLC_PYROPHOSPH_1"/>
    <property type="match status" value="1"/>
</dbReference>
<dbReference type="PROSITE" id="PS00809">
    <property type="entry name" value="ADP_GLC_PYROPHOSPH_2"/>
    <property type="match status" value="1"/>
</dbReference>